<organism>
    <name type="scientific">Pediococcus pentosaceus (strain ATCC 25745 / CCUG 21536 / LMG 10740 / 183-1w)</name>
    <dbReference type="NCBI Taxonomy" id="278197"/>
    <lineage>
        <taxon>Bacteria</taxon>
        <taxon>Bacillati</taxon>
        <taxon>Bacillota</taxon>
        <taxon>Bacilli</taxon>
        <taxon>Lactobacillales</taxon>
        <taxon>Lactobacillaceae</taxon>
        <taxon>Pediococcus</taxon>
    </lineage>
</organism>
<feature type="chain" id="PRO_0000329247" description="Phosphate acyltransferase">
    <location>
        <begin position="1"/>
        <end position="347"/>
    </location>
</feature>
<reference key="1">
    <citation type="journal article" date="2006" name="Proc. Natl. Acad. Sci. U.S.A.">
        <title>Comparative genomics of the lactic acid bacteria.</title>
        <authorList>
            <person name="Makarova K.S."/>
            <person name="Slesarev A."/>
            <person name="Wolf Y.I."/>
            <person name="Sorokin A."/>
            <person name="Mirkin B."/>
            <person name="Koonin E.V."/>
            <person name="Pavlov A."/>
            <person name="Pavlova N."/>
            <person name="Karamychev V."/>
            <person name="Polouchine N."/>
            <person name="Shakhova V."/>
            <person name="Grigoriev I."/>
            <person name="Lou Y."/>
            <person name="Rohksar D."/>
            <person name="Lucas S."/>
            <person name="Huang K."/>
            <person name="Goodstein D.M."/>
            <person name="Hawkins T."/>
            <person name="Plengvidhya V."/>
            <person name="Welker D."/>
            <person name="Hughes J."/>
            <person name="Goh Y."/>
            <person name="Benson A."/>
            <person name="Baldwin K."/>
            <person name="Lee J.-H."/>
            <person name="Diaz-Muniz I."/>
            <person name="Dosti B."/>
            <person name="Smeianov V."/>
            <person name="Wechter W."/>
            <person name="Barabote R."/>
            <person name="Lorca G."/>
            <person name="Altermann E."/>
            <person name="Barrangou R."/>
            <person name="Ganesan B."/>
            <person name="Xie Y."/>
            <person name="Rawsthorne H."/>
            <person name="Tamir D."/>
            <person name="Parker C."/>
            <person name="Breidt F."/>
            <person name="Broadbent J.R."/>
            <person name="Hutkins R."/>
            <person name="O'Sullivan D."/>
            <person name="Steele J."/>
            <person name="Unlu G."/>
            <person name="Saier M.H. Jr."/>
            <person name="Klaenhammer T."/>
            <person name="Richardson P."/>
            <person name="Kozyavkin S."/>
            <person name="Weimer B.C."/>
            <person name="Mills D.A."/>
        </authorList>
    </citation>
    <scope>NUCLEOTIDE SEQUENCE [LARGE SCALE GENOMIC DNA]</scope>
    <source>
        <strain>ATCC 25745 / CCUG 21536 / LMG 10740 / 183-1w</strain>
    </source>
</reference>
<sequence length="347" mass="37597">MKIAVDAMGGDNAPEEIVKGVSEARKALPDVEFILYGKKDEIAKYMDDFRNVKVVHTDEVITMEDEPVKAVRRKKNSSMILAAQAVKNGDADAIFSAGNTGALLAAGLFIIGRIKGLDRPGMTTTLPSLKGENDNFTMLDVGANAESKAKNLHDFAILGNFYGTNVMHVTNPRIALLNNGTEYDKGDKIHKEAYQLLKNDSSLNFVGNIESRELLNGTADVVVTDGFTGNAVLKNIEGTALSMLKLVKETIMNNGVKGKMGGLLLKSAFSQIKDQMDYSKQGGAVLLGVKAPVVKAHGSSNANQVKNALVQVHEIVDSKLVKNLADYFEMHLESIKQDDVDKENENN</sequence>
<evidence type="ECO:0000255" key="1">
    <source>
        <dbReference type="HAMAP-Rule" id="MF_00019"/>
    </source>
</evidence>
<protein>
    <recommendedName>
        <fullName evidence="1">Phosphate acyltransferase</fullName>
        <ecNumber evidence="1">2.3.1.274</ecNumber>
    </recommendedName>
    <alternativeName>
        <fullName evidence="1">Acyl-ACP phosphotransacylase</fullName>
    </alternativeName>
    <alternativeName>
        <fullName evidence="1">Acyl-[acyl-carrier-protein]--phosphate acyltransferase</fullName>
    </alternativeName>
    <alternativeName>
        <fullName evidence="1">Phosphate-acyl-ACP acyltransferase</fullName>
    </alternativeName>
</protein>
<gene>
    <name evidence="1" type="primary">plsX</name>
    <name type="ordered locus">PEPE_0840</name>
</gene>
<proteinExistence type="inferred from homology"/>
<name>PLSX_PEDPA</name>
<keyword id="KW-0963">Cytoplasm</keyword>
<keyword id="KW-0444">Lipid biosynthesis</keyword>
<keyword id="KW-0443">Lipid metabolism</keyword>
<keyword id="KW-0594">Phospholipid biosynthesis</keyword>
<keyword id="KW-1208">Phospholipid metabolism</keyword>
<keyword id="KW-0808">Transferase</keyword>
<comment type="function">
    <text evidence="1">Catalyzes the reversible formation of acyl-phosphate (acyl-PO(4)) from acyl-[acyl-carrier-protein] (acyl-ACP). This enzyme utilizes acyl-ACP as fatty acyl donor, but not acyl-CoA.</text>
</comment>
<comment type="catalytic activity">
    <reaction evidence="1">
        <text>a fatty acyl-[ACP] + phosphate = an acyl phosphate + holo-[ACP]</text>
        <dbReference type="Rhea" id="RHEA:42292"/>
        <dbReference type="Rhea" id="RHEA-COMP:9685"/>
        <dbReference type="Rhea" id="RHEA-COMP:14125"/>
        <dbReference type="ChEBI" id="CHEBI:43474"/>
        <dbReference type="ChEBI" id="CHEBI:59918"/>
        <dbReference type="ChEBI" id="CHEBI:64479"/>
        <dbReference type="ChEBI" id="CHEBI:138651"/>
        <dbReference type="EC" id="2.3.1.274"/>
    </reaction>
</comment>
<comment type="pathway">
    <text evidence="1">Lipid metabolism; phospholipid metabolism.</text>
</comment>
<comment type="subunit">
    <text evidence="1">Homodimer. Probably interacts with PlsY.</text>
</comment>
<comment type="subcellular location">
    <subcellularLocation>
        <location evidence="1">Cytoplasm</location>
    </subcellularLocation>
    <text evidence="1">Associated with the membrane possibly through PlsY.</text>
</comment>
<comment type="similarity">
    <text evidence="1">Belongs to the PlsX family.</text>
</comment>
<dbReference type="EC" id="2.3.1.274" evidence="1"/>
<dbReference type="EMBL" id="CP000422">
    <property type="protein sequence ID" value="ABJ67900.1"/>
    <property type="molecule type" value="Genomic_DNA"/>
</dbReference>
<dbReference type="RefSeq" id="WP_011673294.1">
    <property type="nucleotide sequence ID" value="NC_008525.1"/>
</dbReference>
<dbReference type="SMR" id="Q03FX2"/>
<dbReference type="STRING" id="278197.PEPE_0840"/>
<dbReference type="GeneID" id="33063039"/>
<dbReference type="KEGG" id="ppe:PEPE_0840"/>
<dbReference type="eggNOG" id="COG0416">
    <property type="taxonomic scope" value="Bacteria"/>
</dbReference>
<dbReference type="HOGENOM" id="CLU_039379_1_1_9"/>
<dbReference type="OrthoDB" id="9806408at2"/>
<dbReference type="UniPathway" id="UPA00085"/>
<dbReference type="Proteomes" id="UP000000773">
    <property type="component" value="Chromosome"/>
</dbReference>
<dbReference type="GO" id="GO:0005737">
    <property type="term" value="C:cytoplasm"/>
    <property type="evidence" value="ECO:0007669"/>
    <property type="project" value="UniProtKB-SubCell"/>
</dbReference>
<dbReference type="GO" id="GO:0043811">
    <property type="term" value="F:phosphate:acyl-[acyl carrier protein] acyltransferase activity"/>
    <property type="evidence" value="ECO:0007669"/>
    <property type="project" value="UniProtKB-UniRule"/>
</dbReference>
<dbReference type="GO" id="GO:0006633">
    <property type="term" value="P:fatty acid biosynthetic process"/>
    <property type="evidence" value="ECO:0007669"/>
    <property type="project" value="UniProtKB-UniRule"/>
</dbReference>
<dbReference type="GO" id="GO:0008654">
    <property type="term" value="P:phospholipid biosynthetic process"/>
    <property type="evidence" value="ECO:0007669"/>
    <property type="project" value="UniProtKB-KW"/>
</dbReference>
<dbReference type="Gene3D" id="3.40.718.10">
    <property type="entry name" value="Isopropylmalate Dehydrogenase"/>
    <property type="match status" value="1"/>
</dbReference>
<dbReference type="HAMAP" id="MF_00019">
    <property type="entry name" value="PlsX"/>
    <property type="match status" value="1"/>
</dbReference>
<dbReference type="InterPro" id="IPR003664">
    <property type="entry name" value="FA_synthesis"/>
</dbReference>
<dbReference type="InterPro" id="IPR012281">
    <property type="entry name" value="Phospholipid_synth_PlsX-like"/>
</dbReference>
<dbReference type="NCBIfam" id="TIGR00182">
    <property type="entry name" value="plsX"/>
    <property type="match status" value="1"/>
</dbReference>
<dbReference type="PANTHER" id="PTHR30100">
    <property type="entry name" value="FATTY ACID/PHOSPHOLIPID SYNTHESIS PROTEIN PLSX"/>
    <property type="match status" value="1"/>
</dbReference>
<dbReference type="PANTHER" id="PTHR30100:SF1">
    <property type="entry name" value="PHOSPHATE ACYLTRANSFERASE"/>
    <property type="match status" value="1"/>
</dbReference>
<dbReference type="Pfam" id="PF02504">
    <property type="entry name" value="FA_synthesis"/>
    <property type="match status" value="1"/>
</dbReference>
<dbReference type="PIRSF" id="PIRSF002465">
    <property type="entry name" value="Phsphlp_syn_PlsX"/>
    <property type="match status" value="1"/>
</dbReference>
<dbReference type="SUPFAM" id="SSF53659">
    <property type="entry name" value="Isocitrate/Isopropylmalate dehydrogenase-like"/>
    <property type="match status" value="1"/>
</dbReference>
<accession>Q03FX2</accession>